<dbReference type="EMBL" id="AF157706">
    <property type="protein sequence ID" value="AAA02870.1"/>
    <property type="molecule type" value="Genomic_DNA"/>
</dbReference>
<dbReference type="RefSeq" id="NP_050192.1">
    <property type="nucleotide sequence ID" value="NC_000898.1"/>
</dbReference>
<dbReference type="PDB" id="6Q1F">
    <property type="method" value="EM"/>
    <property type="resolution" value="9.00 A"/>
    <property type="chains" value="e/f/g/h/i/j/k/l/m/n/o/p=1-858"/>
</dbReference>
<dbReference type="PDBsum" id="6Q1F"/>
<dbReference type="SMR" id="P0DTO1"/>
<dbReference type="GeneID" id="1497011"/>
<dbReference type="KEGG" id="vg:1497011"/>
<dbReference type="Proteomes" id="UP000006930">
    <property type="component" value="Segment"/>
</dbReference>
<dbReference type="GO" id="GO:0019033">
    <property type="term" value="C:viral tegument"/>
    <property type="evidence" value="ECO:0007669"/>
    <property type="project" value="UniProtKB-SubCell"/>
</dbReference>
<dbReference type="GO" id="GO:0005198">
    <property type="term" value="F:structural molecule activity"/>
    <property type="evidence" value="ECO:0007669"/>
    <property type="project" value="InterPro"/>
</dbReference>
<dbReference type="InterPro" id="IPR010340">
    <property type="entry name" value="Herpes_UL11/UL32"/>
</dbReference>
<dbReference type="Pfam" id="PF06070">
    <property type="entry name" value="Herpes_UL32"/>
    <property type="match status" value="2"/>
</dbReference>
<accession>P0DTO1</accession>
<accession>Q69535</accession>
<accession>Q785N5</accession>
<reference key="1">
    <citation type="journal article" date="1999" name="J. Virol.">
        <title>Human herpesvirus 6B genome sequence: coding content and comparison with human herpesvirus 6A.</title>
        <authorList>
            <person name="Dominguez G."/>
            <person name="Dambaugh T.R."/>
            <person name="Stamey F.R."/>
            <person name="Dewhurst S."/>
            <person name="Inoue N."/>
            <person name="Pellett P.E."/>
        </authorList>
    </citation>
    <scope>NUCLEOTIDE SEQUENCE [LARGE SCALE GENOMIC DNA]</scope>
</reference>
<reference evidence="5" key="2">
    <citation type="journal article" date="2019" name="Nat. Commun.">
        <title>Atomic structure of the human herpesvirus 6B capsid and capsid-associated tegument complexes.</title>
        <authorList>
            <person name="Zhang Y."/>
            <person name="Liu W."/>
            <person name="Li Z."/>
            <person name="Kumar V."/>
            <person name="Alvarez-Cabrera A.L."/>
            <person name="Leibovitch E.C."/>
            <person name="Cui Y."/>
            <person name="Mei Y."/>
            <person name="Bi G.Q."/>
            <person name="Jacobson S."/>
            <person name="Zhou Z.H."/>
        </authorList>
    </citation>
    <scope>STRUCTURE BY ELECTRON MICROSCOPY (9.00 ANGSTROMS)</scope>
    <scope>SUBCELLULAR LOCATION</scope>
    <scope>SUBUNIT</scope>
    <scope>INTERACTION WITH THE MAJOR CAPSID PROTEIN</scope>
</reference>
<gene>
    <name type="primary">U11</name>
</gene>
<organism>
    <name type="scientific">Human herpesvirus 6B (strain Z29)</name>
    <name type="common">HHV-6 variant B</name>
    <name type="synonym">Human B lymphotropic virus</name>
    <dbReference type="NCBI Taxonomy" id="36351"/>
    <lineage>
        <taxon>Viruses</taxon>
        <taxon>Duplodnaviria</taxon>
        <taxon>Heunggongvirae</taxon>
        <taxon>Peploviricota</taxon>
        <taxon>Herviviricetes</taxon>
        <taxon>Herpesvirales</taxon>
        <taxon>Orthoherpesviridae</taxon>
        <taxon>Betaherpesvirinae</taxon>
        <taxon>Roseolovirus</taxon>
        <taxon>Roseolovirus humanbeta6b</taxon>
        <taxon>Human herpesvirus 6B</taxon>
    </lineage>
</organism>
<keyword id="KW-0002">3D-structure</keyword>
<keyword id="KW-0597">Phosphoprotein</keyword>
<keyword id="KW-1185">Reference proteome</keyword>
<keyword id="KW-0946">Virion</keyword>
<keyword id="KW-0920">Virion tegument</keyword>
<sequence>MDLKAQSIPFAWLDRDKVQRLTNFLSNLENLENVDLREHPYVTNSCVVREGEDVDELKTLYNTFILWLMYHYVLSKRKPDYNAIWQDITKLQNVVNEYLKSKGLNKGNFENMFTNKEKFESQFSDIHRALLRLGNSIRWGSNVPIDTPYVNLTAEDSSEIENNLQDAEKNMLWYTVYNINDPWDENGYLVTSINKLVYLGKLFVTLNQSWSKLEKVAMSQIVTTQNHLSGHLRKNENFNAVYSQRVLQTPLTGQRVESFLKIITSDYEIIKSSLESYSASKAFSVPENGPHSLMDFASLDGRMPSDLSLPSISIDTKRPSADLARLKISQPKSLDAPLKTQRRHKFPESDSVDNAGGKILIKKETLGGRDVRATTPVSSVSLMSGVEPLSSLTSTNLDLRDKSHGNYRIGPSGILDFGVKLPAEAQSNTGDVDLLQDKTSIRSPSSGITDVVNGLANLNLRQNKSDVSRPWSKNTAANADVFDPVHRLVSEQTGTPFVLNNSDVAGSEAKLTTHSTETGVSPHNVSLIKDLRDKDGFRKQKKLDLLGSWTKEKNDKAIVHSREVTGDSGDATETVTARDSPVLRKTKHANDIFAGLNKKYARDVSRGGKGNSRDLYSGGNAEKKETSGKFNVDKEMTQNEQEPLPNLMEAARNAGEEQYVQAGLGQRVNKILAEFTNLISLGEKGIQDILHNQSGTELKLPTENKLGRESEEANVERILEVSDPQNLFKNFKLQNDLDSVQSPFRLPNADLSRDLDSVSFKDALDVKLPGNGEREIDLALQKVKAGERETSDFKVGQDETLIPTQLMKVETPEEKDDVIEKMVLRIRQDGETDEETVPGPGVAESLGIAAKDKSVIAS</sequence>
<organismHost>
    <name type="scientific">Homo sapiens</name>
    <name type="common">Human</name>
    <dbReference type="NCBI Taxonomy" id="9606"/>
</organismHost>
<protein>
    <recommendedName>
        <fullName>Large structural phosphoprotein</fullName>
    </recommendedName>
    <alternativeName>
        <fullName>100 kDa phosphoprotein</fullName>
        <shortName>pp100</shortName>
    </alternativeName>
    <alternativeName>
        <fullName>Major antigenic structural protein</fullName>
    </alternativeName>
</protein>
<evidence type="ECO:0000250" key="1"/>
<evidence type="ECO:0000256" key="2">
    <source>
        <dbReference type="SAM" id="MobiDB-lite"/>
    </source>
</evidence>
<evidence type="ECO:0000269" key="3">
    <source>
    </source>
</evidence>
<evidence type="ECO:0000305" key="4"/>
<evidence type="ECO:0007744" key="5">
    <source>
        <dbReference type="PDB" id="6Q1F"/>
    </source>
</evidence>
<name>P100_HHV6Z</name>
<proteinExistence type="evidence at protein level"/>
<feature type="chain" id="PRO_0000408409" description="Large structural phosphoprotein">
    <location>
        <begin position="1"/>
        <end position="858"/>
    </location>
</feature>
<feature type="region of interest" description="Disordered" evidence="2">
    <location>
        <begin position="603"/>
        <end position="629"/>
    </location>
</feature>
<comment type="subunit">
    <text evidence="3">Homotetramer (PubMed:31767868). Interacts with the major capsid protein (PubMed:31767868). 180 tegument protein pU11 tetramers bind to the virion capsid (PubMed:31767868).</text>
</comment>
<comment type="subcellular location">
    <subcellularLocation>
        <location evidence="3">Virion tegument</location>
    </subcellularLocation>
    <text evidence="1">Also found in dense bodies.</text>
</comment>
<comment type="PTM">
    <text evidence="1">Phosphorylated at multiple sites.</text>
</comment>
<comment type="similarity">
    <text evidence="4">Belongs to the herpesviridae large structural phosphoprotein family.</text>
</comment>